<protein>
    <recommendedName>
        <fullName evidence="11">Adhesion G-protein coupled receptor G1</fullName>
    </recommendedName>
    <alternativeName>
        <fullName evidence="9">G-protein coupled receptor 56</fullName>
    </alternativeName>
    <component>
        <recommendedName>
            <fullName>Adhesion G-protein coupled receptor G1, N-terminal fragment</fullName>
        </recommendedName>
        <alternativeName>
            <fullName>ADGRG1 N-terminal fragment</fullName>
            <shortName>ADGRG1 NT</shortName>
        </alternativeName>
    </component>
    <component>
        <recommendedName>
            <fullName>Adhesion G-protein coupled receptor G1, C-terminal fragment</fullName>
        </recommendedName>
        <alternativeName>
            <fullName>ADGRG1 C-terminal fragment</fullName>
            <shortName>ADGRG1 CT</shortName>
        </alternativeName>
    </component>
</protein>
<dbReference type="EMBL" id="AB193557">
    <property type="protein sequence ID" value="BAD91398.1"/>
    <property type="molecule type" value="mRNA"/>
</dbReference>
<dbReference type="EMBL" id="CU464087">
    <property type="status" value="NOT_ANNOTATED_CDS"/>
    <property type="molecule type" value="Genomic_DNA"/>
</dbReference>
<dbReference type="RefSeq" id="NP_001018317.1">
    <property type="nucleotide sequence ID" value="NM_001020481.1"/>
</dbReference>
<dbReference type="PaxDb" id="7955-ENSDARP00000124010"/>
<dbReference type="GeneID" id="324948"/>
<dbReference type="KEGG" id="dre:324948"/>
<dbReference type="AGR" id="ZFIN:ZDB-GENE-030131-3671"/>
<dbReference type="CTD" id="9289"/>
<dbReference type="ZFIN" id="ZDB-GENE-030131-3671">
    <property type="gene designation" value="adgrg1"/>
</dbReference>
<dbReference type="eggNOG" id="KOG4193">
    <property type="taxonomic scope" value="Eukaryota"/>
</dbReference>
<dbReference type="HOGENOM" id="CLU_026783_0_0_1"/>
<dbReference type="OMA" id="CVWVGAL"/>
<dbReference type="OrthoDB" id="8951579at2759"/>
<dbReference type="PhylomeDB" id="Q59I63"/>
<dbReference type="TreeFam" id="TF321769"/>
<dbReference type="Proteomes" id="UP000000437">
    <property type="component" value="Chromosome 7"/>
</dbReference>
<dbReference type="Bgee" id="ENSDARG00000027222">
    <property type="expression patterns" value="Expressed in pharyngeal gill and 18 other cell types or tissues"/>
</dbReference>
<dbReference type="GO" id="GO:0005886">
    <property type="term" value="C:plasma membrane"/>
    <property type="evidence" value="ECO:0000318"/>
    <property type="project" value="GO_Central"/>
</dbReference>
<dbReference type="GO" id="GO:0004930">
    <property type="term" value="F:G protein-coupled receptor activity"/>
    <property type="evidence" value="ECO:0000318"/>
    <property type="project" value="GO_Central"/>
</dbReference>
<dbReference type="GO" id="GO:0007189">
    <property type="term" value="P:adenylate cyclase-activating G protein-coupled receptor signaling pathway"/>
    <property type="evidence" value="ECO:0000318"/>
    <property type="project" value="GO_Central"/>
</dbReference>
<dbReference type="GO" id="GO:0007166">
    <property type="term" value="P:cell surface receptor signaling pathway"/>
    <property type="evidence" value="ECO:0007669"/>
    <property type="project" value="InterPro"/>
</dbReference>
<dbReference type="GO" id="GO:0048932">
    <property type="term" value="P:myelination of posterior lateral line nerve axons"/>
    <property type="evidence" value="ECO:0000316"/>
    <property type="project" value="ZFIN"/>
</dbReference>
<dbReference type="GO" id="GO:0014003">
    <property type="term" value="P:oligodendrocyte development"/>
    <property type="evidence" value="ECO:0000316"/>
    <property type="project" value="ZFIN"/>
</dbReference>
<dbReference type="GO" id="GO:0032287">
    <property type="term" value="P:peripheral nervous system myelin maintenance"/>
    <property type="evidence" value="ECO:0000315"/>
    <property type="project" value="ZFIN"/>
</dbReference>
<dbReference type="GO" id="GO:0070445">
    <property type="term" value="P:regulation of oligodendrocyte progenitor proliferation"/>
    <property type="evidence" value="ECO:0000315"/>
    <property type="project" value="ZFIN"/>
</dbReference>
<dbReference type="GO" id="GO:0160221">
    <property type="term" value="P:Rho-activating G protein-coupled receptor signaling pathway"/>
    <property type="evidence" value="ECO:0000315"/>
    <property type="project" value="UniProtKB"/>
</dbReference>
<dbReference type="GO" id="GO:0036269">
    <property type="term" value="P:swimming behavior"/>
    <property type="evidence" value="ECO:0000315"/>
    <property type="project" value="ZFIN"/>
</dbReference>
<dbReference type="FunFam" id="1.20.1070.10:FF:000493">
    <property type="entry name" value="Adhesion G protein-coupled receptor G1"/>
    <property type="match status" value="1"/>
</dbReference>
<dbReference type="Gene3D" id="2.60.220.50">
    <property type="match status" value="1"/>
</dbReference>
<dbReference type="Gene3D" id="1.20.1070.10">
    <property type="entry name" value="Rhodopsin 7-helix transmembrane proteins"/>
    <property type="match status" value="1"/>
</dbReference>
<dbReference type="InterPro" id="IPR057244">
    <property type="entry name" value="GAIN_B"/>
</dbReference>
<dbReference type="InterPro" id="IPR046338">
    <property type="entry name" value="GAIN_dom_sf"/>
</dbReference>
<dbReference type="InterPro" id="IPR017981">
    <property type="entry name" value="GPCR_2-like_7TM"/>
</dbReference>
<dbReference type="InterPro" id="IPR000832">
    <property type="entry name" value="GPCR_2_secretin-like"/>
</dbReference>
<dbReference type="InterPro" id="IPR000203">
    <property type="entry name" value="GPS"/>
</dbReference>
<dbReference type="PANTHER" id="PTHR12011:SF435">
    <property type="entry name" value="ADHESION G PROTEIN-COUPLED RECEPTOR G1-RELATED"/>
    <property type="match status" value="1"/>
</dbReference>
<dbReference type="PANTHER" id="PTHR12011">
    <property type="entry name" value="ADHESION G-PROTEIN COUPLED RECEPTOR"/>
    <property type="match status" value="1"/>
</dbReference>
<dbReference type="Pfam" id="PF00002">
    <property type="entry name" value="7tm_2"/>
    <property type="match status" value="1"/>
</dbReference>
<dbReference type="Pfam" id="PF01825">
    <property type="entry name" value="GPS"/>
    <property type="match status" value="1"/>
</dbReference>
<dbReference type="PRINTS" id="PR00249">
    <property type="entry name" value="GPCRSECRETIN"/>
</dbReference>
<dbReference type="SMART" id="SM00303">
    <property type="entry name" value="GPS"/>
    <property type="match status" value="1"/>
</dbReference>
<dbReference type="PROSITE" id="PS50261">
    <property type="entry name" value="G_PROTEIN_RECEP_F2_4"/>
    <property type="match status" value="1"/>
</dbReference>
<dbReference type="PROSITE" id="PS50221">
    <property type="entry name" value="GAIN_B"/>
    <property type="match status" value="1"/>
</dbReference>
<gene>
    <name evidence="10 12" type="primary">adgrg1</name>
    <name evidence="9" type="synonym">gpr56</name>
</gene>
<keyword id="KW-1003">Cell membrane</keyword>
<keyword id="KW-1015">Disulfide bond</keyword>
<keyword id="KW-0325">Glycoprotein</keyword>
<keyword id="KW-0472">Membrane</keyword>
<keyword id="KW-0675">Receptor</keyword>
<keyword id="KW-1185">Reference proteome</keyword>
<keyword id="KW-0732">Signal</keyword>
<keyword id="KW-0812">Transmembrane</keyword>
<keyword id="KW-1133">Transmembrane helix</keyword>
<name>AGRG1_DANRE</name>
<accession>Q59I63</accession>
<accession>A0A0R4IXA8</accession>
<accession>A0A8M2BDY6</accession>
<accession>F1QZM9</accession>
<comment type="function">
    <text evidence="6 7">Adhesion G-protein coupled receptor (aGPCR), which is involved in oligodendrocyte development and maintenance of peripheral myelin (PubMed:25607772, PubMed:29367382). Ligand binding causes a conformation change that triggers signaling via guanine nucleotide-binding proteins (G proteins) and modulates the activity of downstream effectors, such as RhoA pathway (PubMed:25607772). Adgrg1 is coupled to G(12) and/or G(13) G proteins (gna12 and gna13, respectively) and mediates the activation Rho small GTPases (PubMed:25607772, PubMed:29367382). Adgrg1-dependent RhoA signaling promotes timely radial sorting of axons (PubMed:29367382). Required to establish proper myelin thickness and facilitate organization of the myelin sheath in the mature peripheral nervous system (PubMed:29367382).</text>
</comment>
<comment type="activity regulation">
    <text evidence="2">Forms a heterodimer of 2 chains generated by proteolytic processing that remain associated through non-covalent interactions mediated by the GAIN-B domain (By similarity). In the inactivated receptor, the Stachel sequence (also named stalk) is embedded in the GAIN-B domain, where it adopts a beta-strand conformation (By similarity). On activation, the Stachel moves into the 7 transmembrane region and adopts a twisted hook-shaped configuration that forms contacts within the receptor, leading to coupling of a G-alpha protein, which activates signaling (By similarity). The cleaved GAIN-B and N-terminal domains can then dissociate from the rest of the receptor (By similarity).</text>
</comment>
<comment type="subunit">
    <text evidence="2">Heterodimer of 2 chains generated by proteolytic processing; the large extracellular N-terminal fragment (ADGRG1 NT) and the membrane-bound C-terminal fragment (ADGRG1-CT) predominantly remain associated and non-covalently linked.</text>
</comment>
<comment type="subcellular location">
    <subcellularLocation>
        <location evidence="2">Cell membrane</location>
        <topology evidence="3">Multi-pass membrane protein</topology>
    </subcellularLocation>
</comment>
<comment type="developmental stage">
    <text evidence="6">Expressed during early stages of oligodendrocyte development.</text>
</comment>
<comment type="domain">
    <text evidence="2">The Stachel sequence (also named stalk) in the C-terminal part of the extracellular domain (ECD) functions as a tethered agonist (By similarity). In the inactivated receptor, the Stachel sequence (also named stalk) is embedded in the GAIN-B domain, where it adopts a beta-strand conformation (By similarity). On activation, the Stachel moves into the 7 transmembrane region and adopts a twisted hook-shaped configuration that forms contacts within the receptor, leading to coupling of a G-alpha protein, which activates signaling (By similarity).</text>
</comment>
<comment type="PTM">
    <text evidence="2">Autoproteolytically cleaved into 2 fragments; the large extracellular N-terminal fragment (ADGRG1 NT) and the membrane-bound C-terminal fragment (ADGRG1 CT) predominantly remain associated and non-covalently linked.</text>
</comment>
<comment type="disruption phenotype">
    <text evidence="6 8">Fishes are more active (PubMed:37175447). Hypomyelination characterized by a reduction of mature oligodendrocyte number and myelinated axons (PubMed:25607772).</text>
</comment>
<comment type="similarity">
    <text evidence="11">Belongs to the G-protein coupled receptor 2 family. LN-TM7 subfamily.</text>
</comment>
<evidence type="ECO:0000250" key="1">
    <source>
        <dbReference type="UniProtKB" id="Q8K209"/>
    </source>
</evidence>
<evidence type="ECO:0000250" key="2">
    <source>
        <dbReference type="UniProtKB" id="Q9Y653"/>
    </source>
</evidence>
<evidence type="ECO:0000255" key="3"/>
<evidence type="ECO:0000255" key="4">
    <source>
        <dbReference type="PROSITE-ProRule" id="PRU00098"/>
    </source>
</evidence>
<evidence type="ECO:0000255" key="5">
    <source>
        <dbReference type="PROSITE-ProRule" id="PRU00498"/>
    </source>
</evidence>
<evidence type="ECO:0000269" key="6">
    <source>
    </source>
</evidence>
<evidence type="ECO:0000269" key="7">
    <source>
    </source>
</evidence>
<evidence type="ECO:0000269" key="8">
    <source>
    </source>
</evidence>
<evidence type="ECO:0000303" key="9">
    <source>
    </source>
</evidence>
<evidence type="ECO:0000303" key="10">
    <source>
    </source>
</evidence>
<evidence type="ECO:0000305" key="11"/>
<evidence type="ECO:0000312" key="12">
    <source>
        <dbReference type="ZFIN" id="ZDB-GENE-030131-3671"/>
    </source>
</evidence>
<reference key="1">
    <citation type="journal article" date="2005" name="Curr. Biol.">
        <title>The zebrafish-secreted matrix protein You/Scube2 is implicated in long-range regulation of hedgehog signaling.</title>
        <authorList>
            <person name="Kawakami A."/>
            <person name="Nojima Y."/>
            <person name="Toyoda A."/>
            <person name="Takahoko M."/>
            <person name="Satoh M."/>
            <person name="Tanaka H."/>
            <person name="Wada H."/>
            <person name="Masai I."/>
            <person name="Terasaki H."/>
            <person name="Sakaki Y."/>
            <person name="Takeda H."/>
            <person name="Okamoto H."/>
        </authorList>
    </citation>
    <scope>NUCLEOTIDE SEQUENCE [MRNA]</scope>
</reference>
<reference key="2">
    <citation type="journal article" date="2013" name="Nature">
        <title>The zebrafish reference genome sequence and its relationship to the human genome.</title>
        <authorList>
            <person name="Howe K."/>
            <person name="Clark M.D."/>
            <person name="Torroja C.F."/>
            <person name="Torrance J."/>
            <person name="Berthelot C."/>
            <person name="Muffato M."/>
            <person name="Collins J.E."/>
            <person name="Humphray S."/>
            <person name="McLaren K."/>
            <person name="Matthews L."/>
            <person name="McLaren S."/>
            <person name="Sealy I."/>
            <person name="Caccamo M."/>
            <person name="Churcher C."/>
            <person name="Scott C."/>
            <person name="Barrett J.C."/>
            <person name="Koch R."/>
            <person name="Rauch G.J."/>
            <person name="White S."/>
            <person name="Chow W."/>
            <person name="Kilian B."/>
            <person name="Quintais L.T."/>
            <person name="Guerra-Assuncao J.A."/>
            <person name="Zhou Y."/>
            <person name="Gu Y."/>
            <person name="Yen J."/>
            <person name="Vogel J.H."/>
            <person name="Eyre T."/>
            <person name="Redmond S."/>
            <person name="Banerjee R."/>
            <person name="Chi J."/>
            <person name="Fu B."/>
            <person name="Langley E."/>
            <person name="Maguire S.F."/>
            <person name="Laird G.K."/>
            <person name="Lloyd D."/>
            <person name="Kenyon E."/>
            <person name="Donaldson S."/>
            <person name="Sehra H."/>
            <person name="Almeida-King J."/>
            <person name="Loveland J."/>
            <person name="Trevanion S."/>
            <person name="Jones M."/>
            <person name="Quail M."/>
            <person name="Willey D."/>
            <person name="Hunt A."/>
            <person name="Burton J."/>
            <person name="Sims S."/>
            <person name="McLay K."/>
            <person name="Plumb B."/>
            <person name="Davis J."/>
            <person name="Clee C."/>
            <person name="Oliver K."/>
            <person name="Clark R."/>
            <person name="Riddle C."/>
            <person name="Elliot D."/>
            <person name="Threadgold G."/>
            <person name="Harden G."/>
            <person name="Ware D."/>
            <person name="Begum S."/>
            <person name="Mortimore B."/>
            <person name="Kerry G."/>
            <person name="Heath P."/>
            <person name="Phillimore B."/>
            <person name="Tracey A."/>
            <person name="Corby N."/>
            <person name="Dunn M."/>
            <person name="Johnson C."/>
            <person name="Wood J."/>
            <person name="Clark S."/>
            <person name="Pelan S."/>
            <person name="Griffiths G."/>
            <person name="Smith M."/>
            <person name="Glithero R."/>
            <person name="Howden P."/>
            <person name="Barker N."/>
            <person name="Lloyd C."/>
            <person name="Stevens C."/>
            <person name="Harley J."/>
            <person name="Holt K."/>
            <person name="Panagiotidis G."/>
            <person name="Lovell J."/>
            <person name="Beasley H."/>
            <person name="Henderson C."/>
            <person name="Gordon D."/>
            <person name="Auger K."/>
            <person name="Wright D."/>
            <person name="Collins J."/>
            <person name="Raisen C."/>
            <person name="Dyer L."/>
            <person name="Leung K."/>
            <person name="Robertson L."/>
            <person name="Ambridge K."/>
            <person name="Leongamornlert D."/>
            <person name="McGuire S."/>
            <person name="Gilderthorp R."/>
            <person name="Griffiths C."/>
            <person name="Manthravadi D."/>
            <person name="Nichol S."/>
            <person name="Barker G."/>
            <person name="Whitehead S."/>
            <person name="Kay M."/>
            <person name="Brown J."/>
            <person name="Murnane C."/>
            <person name="Gray E."/>
            <person name="Humphries M."/>
            <person name="Sycamore N."/>
            <person name="Barker D."/>
            <person name="Saunders D."/>
            <person name="Wallis J."/>
            <person name="Babbage A."/>
            <person name="Hammond S."/>
            <person name="Mashreghi-Mohammadi M."/>
            <person name="Barr L."/>
            <person name="Martin S."/>
            <person name="Wray P."/>
            <person name="Ellington A."/>
            <person name="Matthews N."/>
            <person name="Ellwood M."/>
            <person name="Woodmansey R."/>
            <person name="Clark G."/>
            <person name="Cooper J."/>
            <person name="Tromans A."/>
            <person name="Grafham D."/>
            <person name="Skuce C."/>
            <person name="Pandian R."/>
            <person name="Andrews R."/>
            <person name="Harrison E."/>
            <person name="Kimberley A."/>
            <person name="Garnett J."/>
            <person name="Fosker N."/>
            <person name="Hall R."/>
            <person name="Garner P."/>
            <person name="Kelly D."/>
            <person name="Bird C."/>
            <person name="Palmer S."/>
            <person name="Gehring I."/>
            <person name="Berger A."/>
            <person name="Dooley C.M."/>
            <person name="Ersan-Urun Z."/>
            <person name="Eser C."/>
            <person name="Geiger H."/>
            <person name="Geisler M."/>
            <person name="Karotki L."/>
            <person name="Kirn A."/>
            <person name="Konantz J."/>
            <person name="Konantz M."/>
            <person name="Oberlander M."/>
            <person name="Rudolph-Geiger S."/>
            <person name="Teucke M."/>
            <person name="Lanz C."/>
            <person name="Raddatz G."/>
            <person name="Osoegawa K."/>
            <person name="Zhu B."/>
            <person name="Rapp A."/>
            <person name="Widaa S."/>
            <person name="Langford C."/>
            <person name="Yang F."/>
            <person name="Schuster S.C."/>
            <person name="Carter N.P."/>
            <person name="Harrow J."/>
            <person name="Ning Z."/>
            <person name="Herrero J."/>
            <person name="Searle S.M."/>
            <person name="Enright A."/>
            <person name="Geisler R."/>
            <person name="Plasterk R.H."/>
            <person name="Lee C."/>
            <person name="Westerfield M."/>
            <person name="de Jong P.J."/>
            <person name="Zon L.I."/>
            <person name="Postlethwait J.H."/>
            <person name="Nusslein-Volhard C."/>
            <person name="Hubbard T.J."/>
            <person name="Roest Crollius H."/>
            <person name="Rogers J."/>
            <person name="Stemple D.L."/>
        </authorList>
    </citation>
    <scope>NUCLEOTIDE SEQUENCE [LARGE SCALE GENOMIC DNA]</scope>
    <source>
        <strain>Tuebingen</strain>
    </source>
</reference>
<reference key="3">
    <citation type="journal article" date="2015" name="Nat. Commun.">
        <title>The adhesion GPCR Gpr56 regulates oligodendrocyte development via interactions with Galpha12/13 and RhoA.</title>
        <authorList>
            <person name="Ackerman S.D."/>
            <person name="Garcia C."/>
            <person name="Piao X."/>
            <person name="Gutmann D.H."/>
            <person name="Monk K.R."/>
        </authorList>
    </citation>
    <scope>FUNCTION</scope>
    <scope>DEVELOPMENTAL STAGE</scope>
    <scope>DISRUPTION PHENOTYPE</scope>
    <scope>MUTAGENESIS OF 325-ASN-TRP-326</scope>
</reference>
<reference key="4">
    <citation type="journal article" date="2018" name="J. Exp. Med.">
        <title>GPR56/ADGRG1 regulates development and maintenance of peripheral myelin.</title>
        <authorList>
            <person name="Ackerman S.D."/>
            <person name="Luo R."/>
            <person name="Poitelon Y."/>
            <person name="Mogha A."/>
            <person name="Harty B.L."/>
            <person name="D'Rozario M."/>
            <person name="Sanchez N.E."/>
            <person name="Lakkaraju A.K.K."/>
            <person name="Gamble P."/>
            <person name="Li J."/>
            <person name="Qu J."/>
            <person name="MacEwan M.R."/>
            <person name="Ray W.Z."/>
            <person name="Aguzzi A."/>
            <person name="Feltri M.L."/>
            <person name="Piao X."/>
            <person name="Monk K.R."/>
        </authorList>
    </citation>
    <scope>FUNCTION</scope>
</reference>
<reference key="5">
    <citation type="journal article" date="2023" name="Int. J. Mol. Sci.">
        <title>Transcriptomics and phenotypic analysis of gpr56 knockout in zebrafish.</title>
        <authorList>
            <person name="Sun L."/>
            <person name="Yang B."/>
            <person name="Peng Z."/>
            <person name="Yang T."/>
            <person name="Qin B."/>
            <person name="Ao J."/>
            <person name="Yang Y."/>
            <person name="Wang J."/>
            <person name="Zheng L."/>
            <person name="Xie H."/>
        </authorList>
    </citation>
    <scope>DISRUPTION PHENOTYPE</scope>
</reference>
<sequence length="648" mass="73124">MKQNPAKTARMWIIICLLFVLGQATDNDRDFKMCGKWLHGIAPQNLEYDLKTGCERIEISANESTLSIQGRITAKCTQSSSIQLDSNPHQNQSHFCVFWEPLLDLLIVEVNGKNHTLCKPNGLQGTCCTDLSQGVQDNAHMYGIVNGSVKGDIITGDLKGNYIFDGAHINCKEKFCDEARLKPRGANMIEEVVMRFNAKGRVDLPCAQGTVIEMDEEFTGHNFTVPAPRFVDANTIPSVYIPSSLRSVSRRKSKVVCTYYKNKTLFERGPSKSALLDDIVGLSVENETIRNLIEPVKIRFHHRPFAPDSSGRCVSWDTKQDNEVNWKDDGCDTVKINEEQTECHCNHLTYFAILVQVEQKSTVRHLKALTFITAVGCAVSLVSCLVLFYWLCKRRRGKKNQISLVHRGLVVAIFLLCLFFILTGILANVANETVCQLTGSLLHYGLLSTLCWMAMEVFHTFLLVRKVFNSPLPIWIFYLMGFGFPFLLVSILLSVGDIYGERKIKPSDDVNNPYRMCWMTEGDKSQLAHYIINIGLLAVVVSSGLVMLFLVVREIRNRPDWKKIHVAFLSIWGLTCLYGTTWALGFLDFGPFSEVTLFLFCIINSLQGFFLMLRYYALERMKKKDVSSSDGSSSGSSKQHMLQTNEKS</sequence>
<proteinExistence type="evidence at protein level"/>
<organism>
    <name type="scientific">Danio rerio</name>
    <name type="common">Zebrafish</name>
    <name type="synonym">Brachydanio rerio</name>
    <dbReference type="NCBI Taxonomy" id="7955"/>
    <lineage>
        <taxon>Eukaryota</taxon>
        <taxon>Metazoa</taxon>
        <taxon>Chordata</taxon>
        <taxon>Craniata</taxon>
        <taxon>Vertebrata</taxon>
        <taxon>Euteleostomi</taxon>
        <taxon>Actinopterygii</taxon>
        <taxon>Neopterygii</taxon>
        <taxon>Teleostei</taxon>
        <taxon>Ostariophysi</taxon>
        <taxon>Cypriniformes</taxon>
        <taxon>Danionidae</taxon>
        <taxon>Danioninae</taxon>
        <taxon>Danio</taxon>
    </lineage>
</organism>
<feature type="signal peptide" evidence="3">
    <location>
        <begin position="1"/>
        <end position="24"/>
    </location>
</feature>
<feature type="chain" id="PRO_5035034248" description="Adhesion G-protein coupled receptor G1">
    <location>
        <begin position="25"/>
        <end position="648"/>
    </location>
</feature>
<feature type="chain" id="PRO_0000462401" description="Adhesion G-protein coupled receptor G1, N-terminal fragment" evidence="11">
    <location>
        <begin position="25"/>
        <end position="348"/>
    </location>
</feature>
<feature type="chain" id="PRO_0000462402" description="Adhesion G-protein coupled receptor G1, C-terminal fragment" evidence="11">
    <location>
        <begin position="349"/>
        <end position="648"/>
    </location>
</feature>
<feature type="topological domain" description="Extracellular" evidence="11">
    <location>
        <begin position="25"/>
        <end position="370"/>
    </location>
</feature>
<feature type="transmembrane region" description="Helical" evidence="3">
    <location>
        <begin position="371"/>
        <end position="391"/>
    </location>
</feature>
<feature type="topological domain" description="Cytoplasmic" evidence="11">
    <location>
        <begin position="392"/>
        <end position="408"/>
    </location>
</feature>
<feature type="transmembrane region" description="Helical" evidence="3">
    <location>
        <begin position="409"/>
        <end position="429"/>
    </location>
</feature>
<feature type="topological domain" description="Extracellular" evidence="11">
    <location>
        <begin position="430"/>
        <end position="443"/>
    </location>
</feature>
<feature type="transmembrane region" description="Helical" evidence="3">
    <location>
        <begin position="444"/>
        <end position="464"/>
    </location>
</feature>
<feature type="topological domain" description="Cytoplasmic" evidence="11">
    <location>
        <begin position="465"/>
        <end position="471"/>
    </location>
</feature>
<feature type="transmembrane region" description="Helical" evidence="3">
    <location>
        <begin position="472"/>
        <end position="492"/>
    </location>
</feature>
<feature type="topological domain" description="Extracellular" evidence="11">
    <location>
        <begin position="493"/>
        <end position="530"/>
    </location>
</feature>
<feature type="transmembrane region" description="Helical" evidence="3">
    <location>
        <begin position="531"/>
        <end position="551"/>
    </location>
</feature>
<feature type="topological domain" description="Cytoplasmic" evidence="11">
    <location>
        <begin position="552"/>
        <end position="563"/>
    </location>
</feature>
<feature type="transmembrane region" description="Helical" evidence="3">
    <location>
        <begin position="564"/>
        <end position="586"/>
    </location>
</feature>
<feature type="topological domain" description="Extracellular" evidence="11">
    <location>
        <begin position="587"/>
        <end position="595"/>
    </location>
</feature>
<feature type="transmembrane region" description="Helical" evidence="3">
    <location>
        <begin position="596"/>
        <end position="618"/>
    </location>
</feature>
<feature type="topological domain" description="Cytoplasmic" evidence="11">
    <location>
        <begin position="619"/>
        <end position="648"/>
    </location>
</feature>
<feature type="domain" description="GAIN-B" evidence="4">
    <location>
        <begin position="214"/>
        <end position="361"/>
    </location>
</feature>
<feature type="region of interest" description="GPS" evidence="4">
    <location>
        <begin position="313"/>
        <end position="361"/>
    </location>
</feature>
<feature type="region of interest" description="Stachel" evidence="4">
    <location>
        <begin position="349"/>
        <end position="361"/>
    </location>
</feature>
<feature type="site" description="Cleavage; by autolysis" evidence="4">
    <location>
        <begin position="348"/>
        <end position="349"/>
    </location>
</feature>
<feature type="glycosylation site" description="N-linked (GlcNAc...) asparagine" evidence="5">
    <location>
        <position position="62"/>
    </location>
</feature>
<feature type="glycosylation site" description="N-linked (GlcNAc...) asparagine" evidence="5">
    <location>
        <position position="91"/>
    </location>
</feature>
<feature type="glycosylation site" description="N-linked (GlcNAc...) asparagine" evidence="5">
    <location>
        <position position="114"/>
    </location>
</feature>
<feature type="glycosylation site" description="N-linked (GlcNAc...) asparagine" evidence="5">
    <location>
        <position position="146"/>
    </location>
</feature>
<feature type="glycosylation site" description="N-linked (GlcNAc...) asparagine" evidence="5">
    <location>
        <position position="222"/>
    </location>
</feature>
<feature type="glycosylation site" description="N-linked (GlcNAc...) asparagine" evidence="5">
    <location>
        <position position="262"/>
    </location>
</feature>
<feature type="glycosylation site" description="N-linked (GlcNAc...) asparagine" evidence="5">
    <location>
        <position position="286"/>
    </location>
</feature>
<feature type="glycosylation site" description="N-linked (GlcNAc...) asparagine" evidence="5">
    <location>
        <position position="431"/>
    </location>
</feature>
<feature type="disulfide bond" evidence="1">
    <location>
        <begin position="34"/>
        <end position="96"/>
    </location>
</feature>
<feature type="disulfide bond" evidence="1">
    <location>
        <begin position="127"/>
        <end position="176"/>
    </location>
</feature>
<feature type="disulfide bond" evidence="4">
    <location>
        <begin position="313"/>
        <end position="343"/>
    </location>
</feature>
<feature type="disulfide bond" evidence="4">
    <location>
        <begin position="331"/>
        <end position="345"/>
    </location>
</feature>
<feature type="mutagenesis site" description="In stl13 mutant; hypomyelination of the central norvous system." evidence="6">
    <location>
        <begin position="325"/>
        <end position="326"/>
    </location>
</feature>
<feature type="sequence conflict" description="In Ref. 1; BAD91398." evidence="11" ref="1">
    <original>K</original>
    <variation>N</variation>
    <location>
        <position position="2"/>
    </location>
</feature>